<proteinExistence type="evidence at protein level"/>
<protein>
    <recommendedName>
        <fullName>Acidic leucine-rich nuclear phosphoprotein 32 family member E</fullName>
    </recommendedName>
</protein>
<organism>
    <name type="scientific">Danio rerio</name>
    <name type="common">Zebrafish</name>
    <name type="synonym">Brachydanio rerio</name>
    <dbReference type="NCBI Taxonomy" id="7955"/>
    <lineage>
        <taxon>Eukaryota</taxon>
        <taxon>Metazoa</taxon>
        <taxon>Chordata</taxon>
        <taxon>Craniata</taxon>
        <taxon>Vertebrata</taxon>
        <taxon>Euteleostomi</taxon>
        <taxon>Actinopterygii</taxon>
        <taxon>Neopterygii</taxon>
        <taxon>Teleostei</taxon>
        <taxon>Ostariophysi</taxon>
        <taxon>Cypriniformes</taxon>
        <taxon>Danionidae</taxon>
        <taxon>Danioninae</taxon>
        <taxon>Danio</taxon>
    </lineage>
</organism>
<sequence>MEMKKRISLELRNRTPAEVAELVVDNCRSSDGEIEGLTDDFKELEFLSMVNVGLTSLAKLPSLPKLRKLELSDNNISGTLETLAEKCANLTYLNLSGNKIKELSTLEALQNLKNLKSLDLFNCEITTLEDYRESIFELLPQVTYLDGFDAEDNEAPDSEADDDDDDEDGDEGAGQLGEYEEEEEEDEEGSEGGEVGLSYLMKEDIQDEEDDDDYVEEEEEEGGEEEADVRGEKRKREAEDEGEDDDEDDD</sequence>
<name>AN32E_DANRE</name>
<dbReference type="EMBL" id="BC056543">
    <property type="protein sequence ID" value="AAH56543.1"/>
    <property type="molecule type" value="mRNA"/>
</dbReference>
<dbReference type="EMBL" id="BC068403">
    <property type="protein sequence ID" value="AAH68403.1"/>
    <property type="molecule type" value="mRNA"/>
</dbReference>
<dbReference type="EMBL" id="BC098881">
    <property type="protein sequence ID" value="AAH98881.1"/>
    <property type="molecule type" value="mRNA"/>
</dbReference>
<dbReference type="RefSeq" id="NP_998442.1">
    <property type="nucleotide sequence ID" value="NM_213277.1"/>
</dbReference>
<dbReference type="SMR" id="Q6NUW5"/>
<dbReference type="FunCoup" id="Q6NUW5">
    <property type="interactions" value="122"/>
</dbReference>
<dbReference type="STRING" id="7955.ENSDARP00000071527"/>
<dbReference type="iPTMnet" id="Q6NUW5"/>
<dbReference type="PaxDb" id="7955-ENSDARP00000071527"/>
<dbReference type="Ensembl" id="ENSDART00000077059">
    <property type="protein sequence ID" value="ENSDARP00000071527"/>
    <property type="gene ID" value="ENSDARG00000054804"/>
</dbReference>
<dbReference type="GeneID" id="406562"/>
<dbReference type="KEGG" id="dre:406562"/>
<dbReference type="AGR" id="ZFIN:ZDB-GENE-040426-2448"/>
<dbReference type="CTD" id="81611"/>
<dbReference type="ZFIN" id="ZDB-GENE-040426-2448">
    <property type="gene designation" value="anp32e"/>
</dbReference>
<dbReference type="eggNOG" id="KOG2739">
    <property type="taxonomic scope" value="Eukaryota"/>
</dbReference>
<dbReference type="HOGENOM" id="CLU_063314_1_1_1"/>
<dbReference type="InParanoid" id="Q6NUW5"/>
<dbReference type="OMA" id="LDNCRCV"/>
<dbReference type="OrthoDB" id="2160613at2759"/>
<dbReference type="PhylomeDB" id="Q6NUW5"/>
<dbReference type="TreeFam" id="TF317206"/>
<dbReference type="PRO" id="PR:Q6NUW5"/>
<dbReference type="Proteomes" id="UP000000437">
    <property type="component" value="Chromosome 19"/>
</dbReference>
<dbReference type="Bgee" id="ENSDARG00000054804">
    <property type="expression patterns" value="Expressed in gastrula and 26 other cell types or tissues"/>
</dbReference>
<dbReference type="ExpressionAtlas" id="Q6NUW5">
    <property type="expression patterns" value="baseline and differential"/>
</dbReference>
<dbReference type="GO" id="GO:0005737">
    <property type="term" value="C:cytoplasm"/>
    <property type="evidence" value="ECO:0007669"/>
    <property type="project" value="UniProtKB-SubCell"/>
</dbReference>
<dbReference type="GO" id="GO:0005634">
    <property type="term" value="C:nucleus"/>
    <property type="evidence" value="ECO:0000318"/>
    <property type="project" value="GO_Central"/>
</dbReference>
<dbReference type="GO" id="GO:0000812">
    <property type="term" value="C:Swr1 complex"/>
    <property type="evidence" value="ECO:0000250"/>
    <property type="project" value="UniProtKB"/>
</dbReference>
<dbReference type="GO" id="GO:0042393">
    <property type="term" value="F:histone binding"/>
    <property type="evidence" value="ECO:0000250"/>
    <property type="project" value="UniProtKB"/>
</dbReference>
<dbReference type="GO" id="GO:0140713">
    <property type="term" value="F:histone chaperone activity"/>
    <property type="evidence" value="ECO:0000250"/>
    <property type="project" value="UniProtKB"/>
</dbReference>
<dbReference type="GO" id="GO:0019212">
    <property type="term" value="F:phosphatase inhibitor activity"/>
    <property type="evidence" value="ECO:0000318"/>
    <property type="project" value="GO_Central"/>
</dbReference>
<dbReference type="GO" id="GO:0006325">
    <property type="term" value="P:chromatin organization"/>
    <property type="evidence" value="ECO:0007669"/>
    <property type="project" value="UniProtKB-KW"/>
</dbReference>
<dbReference type="GO" id="GO:0042981">
    <property type="term" value="P:regulation of apoptotic process"/>
    <property type="evidence" value="ECO:0000318"/>
    <property type="project" value="GO_Central"/>
</dbReference>
<dbReference type="FunFam" id="3.80.10.10:FF:000003">
    <property type="entry name" value="Acidic leucine-rich nuclear phosphoprotein 32 family member A"/>
    <property type="match status" value="1"/>
</dbReference>
<dbReference type="Gene3D" id="3.80.10.10">
    <property type="entry name" value="Ribonuclease Inhibitor"/>
    <property type="match status" value="1"/>
</dbReference>
<dbReference type="InterPro" id="IPR045081">
    <property type="entry name" value="AN32"/>
</dbReference>
<dbReference type="InterPro" id="IPR001611">
    <property type="entry name" value="Leu-rich_rpt"/>
</dbReference>
<dbReference type="InterPro" id="IPR032675">
    <property type="entry name" value="LRR_dom_sf"/>
</dbReference>
<dbReference type="InterPro" id="IPR003603">
    <property type="entry name" value="U2A'_phosphoprotein32A_C"/>
</dbReference>
<dbReference type="PANTHER" id="PTHR11375">
    <property type="entry name" value="ACIDIC LEUCINE-RICH NUCLEAR PHOSPHOPROTEIN 32"/>
    <property type="match status" value="1"/>
</dbReference>
<dbReference type="PANTHER" id="PTHR11375:SF5">
    <property type="entry name" value="ACIDIC LEUCINE-RICH NUCLEAR PHOSPHOPROTEIN 32 FAMILY MEMBER E"/>
    <property type="match status" value="1"/>
</dbReference>
<dbReference type="Pfam" id="PF14580">
    <property type="entry name" value="LRR_9"/>
    <property type="match status" value="1"/>
</dbReference>
<dbReference type="SMART" id="SM00446">
    <property type="entry name" value="LRRcap"/>
    <property type="match status" value="1"/>
</dbReference>
<dbReference type="SUPFAM" id="SSF52058">
    <property type="entry name" value="L domain-like"/>
    <property type="match status" value="1"/>
</dbReference>
<dbReference type="PROSITE" id="PS51450">
    <property type="entry name" value="LRR"/>
    <property type="match status" value="4"/>
</dbReference>
<keyword id="KW-0143">Chaperone</keyword>
<keyword id="KW-0156">Chromatin regulator</keyword>
<keyword id="KW-0963">Cytoplasm</keyword>
<keyword id="KW-0433">Leucine-rich repeat</keyword>
<keyword id="KW-0539">Nucleus</keyword>
<keyword id="KW-0597">Phosphoprotein</keyword>
<keyword id="KW-1185">Reference proteome</keyword>
<keyword id="KW-0677">Repeat</keyword>
<evidence type="ECO:0000250" key="1"/>
<evidence type="ECO:0000256" key="2">
    <source>
        <dbReference type="SAM" id="MobiDB-lite"/>
    </source>
</evidence>
<evidence type="ECO:0000269" key="3">
    <source>
    </source>
</evidence>
<evidence type="ECO:0000305" key="4"/>
<accession>Q6NUW5</accession>
<feature type="chain" id="PRO_0000240192" description="Acidic leucine-rich nuclear phosphoprotein 32 family member E">
    <location>
        <begin position="1"/>
        <end position="250"/>
    </location>
</feature>
<feature type="repeat" description="LRR 1">
    <location>
        <begin position="43"/>
        <end position="64"/>
    </location>
</feature>
<feature type="repeat" description="LRR 2">
    <location>
        <begin position="65"/>
        <end position="87"/>
    </location>
</feature>
<feature type="repeat" description="LRR 3">
    <location>
        <begin position="89"/>
        <end position="110"/>
    </location>
</feature>
<feature type="domain" description="LRRCT">
    <location>
        <begin position="123"/>
        <end position="161"/>
    </location>
</feature>
<feature type="region of interest" description="Disordered" evidence="2">
    <location>
        <begin position="149"/>
        <end position="250"/>
    </location>
</feature>
<feature type="region of interest" description="ZID domain" evidence="1">
    <location>
        <begin position="194"/>
        <end position="247"/>
    </location>
</feature>
<feature type="compositionally biased region" description="Acidic residues" evidence="2">
    <location>
        <begin position="149"/>
        <end position="171"/>
    </location>
</feature>
<feature type="compositionally biased region" description="Acidic residues" evidence="2">
    <location>
        <begin position="178"/>
        <end position="191"/>
    </location>
</feature>
<feature type="compositionally biased region" description="Acidic residues" evidence="2">
    <location>
        <begin position="205"/>
        <end position="227"/>
    </location>
</feature>
<feature type="compositionally biased region" description="Basic and acidic residues" evidence="2">
    <location>
        <begin position="228"/>
        <end position="238"/>
    </location>
</feature>
<feature type="compositionally biased region" description="Acidic residues" evidence="2">
    <location>
        <begin position="239"/>
        <end position="250"/>
    </location>
</feature>
<feature type="modified residue" description="Phosphoserine" evidence="3">
    <location>
        <position position="8"/>
    </location>
</feature>
<reference key="1">
    <citation type="submission" date="2004-04" db="EMBL/GenBank/DDBJ databases">
        <authorList>
            <consortium name="NIH - Zebrafish Gene Collection (ZGC) project"/>
        </authorList>
    </citation>
    <scope>NUCLEOTIDE SEQUENCE [LARGE SCALE MRNA]</scope>
    <source>
        <strain>AB</strain>
        <tissue>Embryo</tissue>
        <tissue>Kidney</tissue>
    </source>
</reference>
<reference key="2">
    <citation type="journal article" date="2005" name="Cerebellum">
        <title>The Anp32 family of proteins containing leucine-rich repeats.</title>
        <authorList>
            <person name="Matilla A."/>
            <person name="Radrizzani M."/>
        </authorList>
    </citation>
    <scope>GENE FAMILY</scope>
    <scope>NOMENCLATURE</scope>
</reference>
<reference key="3">
    <citation type="journal article" date="2008" name="J. Proteome Res.">
        <title>Online automated in vivo zebrafish phosphoproteomics: from large-scale analysis down to a single embryo.</title>
        <authorList>
            <person name="Lemeer S."/>
            <person name="Pinkse M.W.H."/>
            <person name="Mohammed S."/>
            <person name="van Breukelen B."/>
            <person name="den Hertog J."/>
            <person name="Slijper M."/>
            <person name="Heck A.J.R."/>
        </authorList>
    </citation>
    <scope>PHOSPHORYLATION [LARGE SCALE ANALYSIS] AT SER-8</scope>
    <scope>IDENTIFICATION BY MASS SPECTROMETRY</scope>
    <source>
        <tissue>Embryo</tissue>
    </source>
</reference>
<comment type="function">
    <text evidence="1">Histone chaperone that specifically mediates the genome-wide removal of histone H2A.Z/H2AZ1 from the nucleosome: removes H2A.Z/H2AZ1 from its normal sites of deposition, especially from enhancer and insulator regions. Not involved in deposition of H2A.Z/H2AZ1 in the nucleosome. May stabilize the evicted H2A.Z/H2AZ1-H2B dimer, thus shifting the equilibrium towards dissociation and the off-chromatin state. Inhibits activity of protein phosphatase 2A (PP2A). Does not inhibit protein phosphatase 1. May play a role in cerebellar development and synaptogenesis (By similarity).</text>
</comment>
<comment type="subunit">
    <text evidence="1">Component of a SWR1-like complex. Interacts with H2A.Z/H2AZ1 (By similarity).</text>
</comment>
<comment type="subcellular location">
    <subcellularLocation>
        <location evidence="1">Cytoplasm</location>
    </subcellularLocation>
    <subcellularLocation>
        <location evidence="1">Nucleus</location>
    </subcellularLocation>
</comment>
<comment type="domain">
    <text evidence="1">The H2A.Z-interacting domain (ZID) mediates a direct interaction with H2A.Z/H2AZ1.</text>
</comment>
<comment type="PTM">
    <text evidence="1">Phosphorylated. The phosphorylation is nuclear localization signal (NLS)-dependent (By similarity).</text>
</comment>
<comment type="similarity">
    <text evidence="4">Belongs to the ANP32 family.</text>
</comment>
<gene>
    <name type="primary">anp32e</name>
    <name type="ORF">zgc:65995</name>
    <name type="ORF">zgc:85827</name>
</gene>